<feature type="transit peptide" description="Mitochondrion" evidence="1">
    <location>
        <begin position="1"/>
        <end position="34"/>
    </location>
</feature>
<feature type="chain" id="PRO_0000261649" description="Large ribosomal subunit protein uL30m">
    <location>
        <begin position="35"/>
        <end position="161"/>
    </location>
</feature>
<feature type="splice variant" id="VSP_021746" description="In isoform 2." evidence="10">
    <original>M</original>
    <variation>MSSTLGKLSNQVEETLPLLKKPLKRAITTLM</variation>
    <location>
        <position position="1"/>
    </location>
</feature>
<feature type="splice variant" id="VSP_021747" description="In isoform 3." evidence="9">
    <original>IKPLKLPQGLPAEENMSNTCLKSTGELVVQWHLKPVEQKAHES</original>
    <variation>FVVSSQLFLKCIA</variation>
    <location>
        <begin position="119"/>
        <end position="161"/>
    </location>
</feature>
<feature type="sequence variant" id="VAR_034462" description="In dbSNP:rs1044575." evidence="2 3 8">
    <original>A</original>
    <variation>T</variation>
    <location>
        <position position="130"/>
    </location>
</feature>
<feature type="sequence conflict" description="In Ref. 2; BAC86542." evidence="12" ref="2">
    <original>V</original>
    <variation>A</variation>
    <location>
        <position position="45"/>
    </location>
</feature>
<feature type="helix" evidence="19">
    <location>
        <begin position="43"/>
        <end position="46"/>
    </location>
</feature>
<feature type="helix" evidence="19">
    <location>
        <begin position="50"/>
        <end position="56"/>
    </location>
</feature>
<feature type="strand" evidence="19">
    <location>
        <begin position="60"/>
        <end position="62"/>
    </location>
</feature>
<feature type="strand" evidence="19">
    <location>
        <begin position="65"/>
        <end position="71"/>
    </location>
</feature>
<feature type="strand" evidence="20">
    <location>
        <begin position="75"/>
        <end position="78"/>
    </location>
</feature>
<feature type="helix" evidence="19">
    <location>
        <begin position="80"/>
        <end position="89"/>
    </location>
</feature>
<feature type="strand" evidence="22">
    <location>
        <begin position="93"/>
        <end position="95"/>
    </location>
</feature>
<feature type="strand" evidence="19">
    <location>
        <begin position="98"/>
        <end position="101"/>
    </location>
</feature>
<feature type="helix" evidence="19">
    <location>
        <begin position="104"/>
        <end position="112"/>
    </location>
</feature>
<feature type="turn" evidence="19">
    <location>
        <begin position="113"/>
        <end position="115"/>
    </location>
</feature>
<feature type="strand" evidence="19">
    <location>
        <begin position="116"/>
        <end position="121"/>
    </location>
</feature>
<feature type="turn" evidence="19">
    <location>
        <begin position="132"/>
        <end position="135"/>
    </location>
</feature>
<feature type="strand" evidence="19">
    <location>
        <begin position="143"/>
        <end position="147"/>
    </location>
</feature>
<feature type="strand" evidence="21">
    <location>
        <begin position="151"/>
        <end position="153"/>
    </location>
</feature>
<accession>Q8TCC3</accession>
<accession>A6NIC6</accession>
<accession>D3DVI0</accession>
<accession>D3DVI3</accession>
<accession>Q0D2Q7</accession>
<accession>Q6ZTP4</accession>
<accession>Q96Q69</accession>
<accession>Q9P0N0</accession>
<gene>
    <name type="primary">MRPL30</name>
    <name type="synonym">MRPL28</name>
    <name type="synonym">RPML28</name>
    <name type="ORF">HSPC249</name>
</gene>
<comment type="subunit">
    <text evidence="4 5 6 7">Component of the mitochondrial large ribosomal subunit (mt-LSU) (PubMed:25278503, PubMed:25838379, PubMed:28892042, PubMed:35177605). Mature mammalian 55S mitochondrial ribosomes consist of a small (28S) and a large (39S) subunit. The 28S small subunit contains a 12S ribosomal RNA (12S mt-rRNA) and 30 different proteins. The 39S large subunit contains a 16S rRNA (16S mt-rRNA), a copy of mitochondrial valine transfer RNA (mt-tRNA(Val)), which plays an integral structural role, and 52 different proteins.</text>
</comment>
<comment type="subcellular location">
    <subcellularLocation>
        <location evidence="4 5 6">Mitochondrion</location>
    </subcellularLocation>
</comment>
<comment type="alternative products">
    <event type="alternative splicing"/>
    <isoform>
        <id>Q8TCC3-1</id>
        <name>1</name>
        <sequence type="displayed"/>
    </isoform>
    <isoform>
        <id>Q8TCC3-2</id>
        <name>2</name>
        <sequence type="described" ref="VSP_021746"/>
    </isoform>
    <isoform>
        <id>Q8TCC3-3</id>
        <name>3</name>
        <sequence type="described" ref="VSP_021747"/>
    </isoform>
</comment>
<comment type="similarity">
    <text evidence="12">Belongs to the universal ribosomal protein uL30 family.</text>
</comment>
<comment type="sequence caution" evidence="12">
    <conflict type="frameshift">
        <sequence resource="EMBL-CDS" id="AAF36169"/>
    </conflict>
</comment>
<proteinExistence type="evidence at protein level"/>
<name>RM30_HUMAN</name>
<dbReference type="EMBL" id="AF151083">
    <property type="protein sequence ID" value="AAF36169.1"/>
    <property type="status" value="ALT_FRAME"/>
    <property type="molecule type" value="mRNA"/>
</dbReference>
<dbReference type="EMBL" id="AK126402">
    <property type="protein sequence ID" value="BAC86542.1"/>
    <property type="molecule type" value="mRNA"/>
</dbReference>
<dbReference type="EMBL" id="AC092587">
    <property type="protein sequence ID" value="AAX88929.1"/>
    <property type="molecule type" value="Genomic_DNA"/>
</dbReference>
<dbReference type="EMBL" id="CH471127">
    <property type="protein sequence ID" value="EAX01876.1"/>
    <property type="molecule type" value="Genomic_DNA"/>
</dbReference>
<dbReference type="EMBL" id="CH471127">
    <property type="protein sequence ID" value="EAX01878.1"/>
    <property type="molecule type" value="Genomic_DNA"/>
</dbReference>
<dbReference type="EMBL" id="CH471127">
    <property type="protein sequence ID" value="EAX01880.1"/>
    <property type="molecule type" value="Genomic_DNA"/>
</dbReference>
<dbReference type="EMBL" id="CH471127">
    <property type="protein sequence ID" value="EAX01881.1"/>
    <property type="molecule type" value="Genomic_DNA"/>
</dbReference>
<dbReference type="EMBL" id="CH471127">
    <property type="protein sequence ID" value="EAX01882.1"/>
    <property type="molecule type" value="Genomic_DNA"/>
</dbReference>
<dbReference type="EMBL" id="CH471127">
    <property type="protein sequence ID" value="EAX01883.1"/>
    <property type="molecule type" value="Genomic_DNA"/>
</dbReference>
<dbReference type="EMBL" id="BC000217">
    <property type="protein sequence ID" value="AAH00217.1"/>
    <property type="molecule type" value="mRNA"/>
</dbReference>
<dbReference type="EMBL" id="BC022391">
    <property type="protein sequence ID" value="AAH22391.1"/>
    <property type="molecule type" value="mRNA"/>
</dbReference>
<dbReference type="EMBL" id="AB051342">
    <property type="protein sequence ID" value="BAB54932.1"/>
    <property type="molecule type" value="Genomic_DNA"/>
</dbReference>
<dbReference type="CCDS" id="CCDS2041.1">
    <molecule id="Q8TCC3-1"/>
</dbReference>
<dbReference type="RefSeq" id="NP_660213.1">
    <molecule id="Q8TCC3-1"/>
    <property type="nucleotide sequence ID" value="NM_145212.4"/>
</dbReference>
<dbReference type="PDB" id="3J7Y">
    <property type="method" value="EM"/>
    <property type="resolution" value="3.40 A"/>
    <property type="chains" value="Z=1-161"/>
</dbReference>
<dbReference type="PDB" id="3J9M">
    <property type="method" value="EM"/>
    <property type="resolution" value="3.50 A"/>
    <property type="chains" value="Z=1-161"/>
</dbReference>
<dbReference type="PDB" id="5OOL">
    <property type="method" value="EM"/>
    <property type="resolution" value="3.06 A"/>
    <property type="chains" value="Z=1-161"/>
</dbReference>
<dbReference type="PDB" id="5OOM">
    <property type="method" value="EM"/>
    <property type="resolution" value="3.03 A"/>
    <property type="chains" value="Z=1-161"/>
</dbReference>
<dbReference type="PDB" id="6I9R">
    <property type="method" value="EM"/>
    <property type="resolution" value="3.90 A"/>
    <property type="chains" value="Z=1-161"/>
</dbReference>
<dbReference type="PDB" id="6NU2">
    <property type="method" value="EM"/>
    <property type="resolution" value="3.90 A"/>
    <property type="chains" value="Z=35-154"/>
</dbReference>
<dbReference type="PDB" id="6NU3">
    <property type="method" value="EM"/>
    <property type="resolution" value="4.40 A"/>
    <property type="chains" value="Z=1-161"/>
</dbReference>
<dbReference type="PDB" id="6VLZ">
    <property type="method" value="EM"/>
    <property type="resolution" value="2.97 A"/>
    <property type="chains" value="Z=1-161"/>
</dbReference>
<dbReference type="PDB" id="6VMI">
    <property type="method" value="EM"/>
    <property type="resolution" value="2.96 A"/>
    <property type="chains" value="Z=1-161"/>
</dbReference>
<dbReference type="PDB" id="6ZM5">
    <property type="method" value="EM"/>
    <property type="resolution" value="2.89 A"/>
    <property type="chains" value="Z=1-161"/>
</dbReference>
<dbReference type="PDB" id="6ZM6">
    <property type="method" value="EM"/>
    <property type="resolution" value="2.59 A"/>
    <property type="chains" value="Z=1-161"/>
</dbReference>
<dbReference type="PDB" id="6ZS9">
    <property type="method" value="EM"/>
    <property type="resolution" value="4.00 A"/>
    <property type="chains" value="XZ=1-161"/>
</dbReference>
<dbReference type="PDB" id="6ZSA">
    <property type="method" value="EM"/>
    <property type="resolution" value="4.00 A"/>
    <property type="chains" value="XZ=1-161"/>
</dbReference>
<dbReference type="PDB" id="6ZSB">
    <property type="method" value="EM"/>
    <property type="resolution" value="4.50 A"/>
    <property type="chains" value="XZ=1-161"/>
</dbReference>
<dbReference type="PDB" id="6ZSC">
    <property type="method" value="EM"/>
    <property type="resolution" value="3.50 A"/>
    <property type="chains" value="XZ=1-161"/>
</dbReference>
<dbReference type="PDB" id="6ZSD">
    <property type="method" value="EM"/>
    <property type="resolution" value="3.70 A"/>
    <property type="chains" value="XZ=1-161"/>
</dbReference>
<dbReference type="PDB" id="6ZSE">
    <property type="method" value="EM"/>
    <property type="resolution" value="5.00 A"/>
    <property type="chains" value="XZ=1-161"/>
</dbReference>
<dbReference type="PDB" id="6ZSG">
    <property type="method" value="EM"/>
    <property type="resolution" value="4.00 A"/>
    <property type="chains" value="XZ=1-161"/>
</dbReference>
<dbReference type="PDB" id="7A5F">
    <property type="method" value="EM"/>
    <property type="resolution" value="4.40 A"/>
    <property type="chains" value="Z3=1-161"/>
</dbReference>
<dbReference type="PDB" id="7A5G">
    <property type="method" value="EM"/>
    <property type="resolution" value="4.33 A"/>
    <property type="chains" value="Z3=1-161"/>
</dbReference>
<dbReference type="PDB" id="7A5H">
    <property type="method" value="EM"/>
    <property type="resolution" value="3.30 A"/>
    <property type="chains" value="Z=1-161"/>
</dbReference>
<dbReference type="PDB" id="7A5I">
    <property type="method" value="EM"/>
    <property type="resolution" value="3.70 A"/>
    <property type="chains" value="Z3=1-161"/>
</dbReference>
<dbReference type="PDB" id="7A5J">
    <property type="method" value="EM"/>
    <property type="resolution" value="3.10 A"/>
    <property type="chains" value="Z=1-161"/>
</dbReference>
<dbReference type="PDB" id="7A5K">
    <property type="method" value="EM"/>
    <property type="resolution" value="3.70 A"/>
    <property type="chains" value="Z3=1-161"/>
</dbReference>
<dbReference type="PDB" id="7L08">
    <property type="method" value="EM"/>
    <property type="resolution" value="3.49 A"/>
    <property type="chains" value="Z=1-161"/>
</dbReference>
<dbReference type="PDB" id="7L20">
    <property type="method" value="EM"/>
    <property type="resolution" value="3.15 A"/>
    <property type="chains" value="Z=1-161"/>
</dbReference>
<dbReference type="PDB" id="7O9K">
    <property type="method" value="EM"/>
    <property type="resolution" value="3.10 A"/>
    <property type="chains" value="Z=1-161"/>
</dbReference>
<dbReference type="PDB" id="7O9M">
    <property type="method" value="EM"/>
    <property type="resolution" value="2.50 A"/>
    <property type="chains" value="Z=1-161"/>
</dbReference>
<dbReference type="PDB" id="7ODR">
    <property type="method" value="EM"/>
    <property type="resolution" value="2.90 A"/>
    <property type="chains" value="Z=1-161"/>
</dbReference>
<dbReference type="PDB" id="7ODS">
    <property type="method" value="EM"/>
    <property type="resolution" value="3.10 A"/>
    <property type="chains" value="Z=1-161"/>
</dbReference>
<dbReference type="PDB" id="7ODT">
    <property type="method" value="EM"/>
    <property type="resolution" value="3.10 A"/>
    <property type="chains" value="Z=1-161"/>
</dbReference>
<dbReference type="PDB" id="7OF0">
    <property type="method" value="EM"/>
    <property type="resolution" value="2.20 A"/>
    <property type="chains" value="Z=1-161"/>
</dbReference>
<dbReference type="PDB" id="7OF2">
    <property type="method" value="EM"/>
    <property type="resolution" value="2.70 A"/>
    <property type="chains" value="Z=1-161"/>
</dbReference>
<dbReference type="PDB" id="7OF3">
    <property type="method" value="EM"/>
    <property type="resolution" value="2.70 A"/>
    <property type="chains" value="Z=1-161"/>
</dbReference>
<dbReference type="PDB" id="7OF4">
    <property type="method" value="EM"/>
    <property type="resolution" value="2.70 A"/>
    <property type="chains" value="Z=1-161"/>
</dbReference>
<dbReference type="PDB" id="7OF5">
    <property type="method" value="EM"/>
    <property type="resolution" value="2.90 A"/>
    <property type="chains" value="Z=1-161"/>
</dbReference>
<dbReference type="PDB" id="7OF6">
    <property type="method" value="EM"/>
    <property type="resolution" value="2.60 A"/>
    <property type="chains" value="Z=1-161"/>
</dbReference>
<dbReference type="PDB" id="7OF7">
    <property type="method" value="EM"/>
    <property type="resolution" value="2.50 A"/>
    <property type="chains" value="Z=1-161"/>
</dbReference>
<dbReference type="PDB" id="7OG4">
    <property type="method" value="EM"/>
    <property type="resolution" value="3.80 A"/>
    <property type="chains" value="XZ=1-161"/>
</dbReference>
<dbReference type="PDB" id="7OI6">
    <property type="method" value="EM"/>
    <property type="resolution" value="5.70 A"/>
    <property type="chains" value="Z=1-161"/>
</dbReference>
<dbReference type="PDB" id="7OI7">
    <property type="method" value="EM"/>
    <property type="resolution" value="3.50 A"/>
    <property type="chains" value="Z=1-161"/>
</dbReference>
<dbReference type="PDB" id="7OI8">
    <property type="method" value="EM"/>
    <property type="resolution" value="3.50 A"/>
    <property type="chains" value="Z=1-161"/>
</dbReference>
<dbReference type="PDB" id="7OI9">
    <property type="method" value="EM"/>
    <property type="resolution" value="3.30 A"/>
    <property type="chains" value="Z=1-161"/>
</dbReference>
<dbReference type="PDB" id="7OIA">
    <property type="method" value="EM"/>
    <property type="resolution" value="3.20 A"/>
    <property type="chains" value="Z=1-161"/>
</dbReference>
<dbReference type="PDB" id="7OIB">
    <property type="method" value="EM"/>
    <property type="resolution" value="3.30 A"/>
    <property type="chains" value="Z=1-161"/>
</dbReference>
<dbReference type="PDB" id="7OIC">
    <property type="method" value="EM"/>
    <property type="resolution" value="3.10 A"/>
    <property type="chains" value="Z=1-161"/>
</dbReference>
<dbReference type="PDB" id="7OID">
    <property type="method" value="EM"/>
    <property type="resolution" value="3.70 A"/>
    <property type="chains" value="Z=1-161"/>
</dbReference>
<dbReference type="PDB" id="7OIE">
    <property type="method" value="EM"/>
    <property type="resolution" value="3.50 A"/>
    <property type="chains" value="Z=1-161"/>
</dbReference>
<dbReference type="PDB" id="7PD3">
    <property type="method" value="EM"/>
    <property type="resolution" value="3.40 A"/>
    <property type="chains" value="Z=1-161"/>
</dbReference>
<dbReference type="PDB" id="7PO4">
    <property type="method" value="EM"/>
    <property type="resolution" value="2.56 A"/>
    <property type="chains" value="Z=1-161"/>
</dbReference>
<dbReference type="PDB" id="7QH6">
    <property type="method" value="EM"/>
    <property type="resolution" value="3.08 A"/>
    <property type="chains" value="Z=1-161"/>
</dbReference>
<dbReference type="PDB" id="7QH7">
    <property type="method" value="EM"/>
    <property type="resolution" value="2.89 A"/>
    <property type="chains" value="Z=35-149"/>
</dbReference>
<dbReference type="PDB" id="7QI4">
    <property type="method" value="EM"/>
    <property type="resolution" value="2.21 A"/>
    <property type="chains" value="Z=1-161"/>
</dbReference>
<dbReference type="PDB" id="7QI5">
    <property type="method" value="EM"/>
    <property type="resolution" value="2.63 A"/>
    <property type="chains" value="Z=1-161"/>
</dbReference>
<dbReference type="PDB" id="7QI6">
    <property type="method" value="EM"/>
    <property type="resolution" value="2.98 A"/>
    <property type="chains" value="Z=1-161"/>
</dbReference>
<dbReference type="PDB" id="8ANY">
    <property type="method" value="EM"/>
    <property type="resolution" value="2.85 A"/>
    <property type="chains" value="Z=1-161"/>
</dbReference>
<dbReference type="PDB" id="8K2A">
    <property type="method" value="EM"/>
    <property type="resolution" value="2.90 A"/>
    <property type="chains" value="Ld=1-161"/>
</dbReference>
<dbReference type="PDB" id="8K2B">
    <property type="method" value="EM"/>
    <property type="resolution" value="3.40 A"/>
    <property type="chains" value="Ld=1-161"/>
</dbReference>
<dbReference type="PDB" id="8OIR">
    <property type="method" value="EM"/>
    <property type="resolution" value="3.10 A"/>
    <property type="chains" value="BG=1-161"/>
</dbReference>
<dbReference type="PDB" id="8OIT">
    <property type="method" value="EM"/>
    <property type="resolution" value="2.90 A"/>
    <property type="chains" value="BG=1-161"/>
</dbReference>
<dbReference type="PDB" id="8PK0">
    <property type="method" value="EM"/>
    <property type="resolution" value="3.03 A"/>
    <property type="chains" value="Z=1-161"/>
</dbReference>
<dbReference type="PDB" id="8QSJ">
    <property type="method" value="EM"/>
    <property type="resolution" value="3.00 A"/>
    <property type="chains" value="Z=1-161"/>
</dbReference>
<dbReference type="PDB" id="8QU1">
    <property type="method" value="EM"/>
    <property type="resolution" value="2.74 A"/>
    <property type="chains" value="Z=1-161"/>
</dbReference>
<dbReference type="PDB" id="8QU5">
    <property type="method" value="EM"/>
    <property type="resolution" value="2.42 A"/>
    <property type="chains" value="Z=1-161"/>
</dbReference>
<dbReference type="PDB" id="8RRI">
    <property type="method" value="EM"/>
    <property type="resolution" value="2.40 A"/>
    <property type="chains" value="Z=1-161"/>
</dbReference>
<dbReference type="PDB" id="8XT0">
    <property type="method" value="EM"/>
    <property type="resolution" value="3.20 A"/>
    <property type="chains" value="Ld=1-161"/>
</dbReference>
<dbReference type="PDB" id="8XT1">
    <property type="method" value="EM"/>
    <property type="resolution" value="3.10 A"/>
    <property type="chains" value="Ld=1-161"/>
</dbReference>
<dbReference type="PDB" id="8XT2">
    <property type="method" value="EM"/>
    <property type="resolution" value="3.30 A"/>
    <property type="chains" value="Ld=1-161"/>
</dbReference>
<dbReference type="PDB" id="8XT3">
    <property type="method" value="EM"/>
    <property type="resolution" value="3.10 A"/>
    <property type="chains" value="Ld=1-161"/>
</dbReference>
<dbReference type="PDBsum" id="3J7Y"/>
<dbReference type="PDBsum" id="3J9M"/>
<dbReference type="PDBsum" id="5OOL"/>
<dbReference type="PDBsum" id="5OOM"/>
<dbReference type="PDBsum" id="6I9R"/>
<dbReference type="PDBsum" id="6NU2"/>
<dbReference type="PDBsum" id="6NU3"/>
<dbReference type="PDBsum" id="6VLZ"/>
<dbReference type="PDBsum" id="6VMI"/>
<dbReference type="PDBsum" id="6ZM5"/>
<dbReference type="PDBsum" id="6ZM6"/>
<dbReference type="PDBsum" id="6ZS9"/>
<dbReference type="PDBsum" id="6ZSA"/>
<dbReference type="PDBsum" id="6ZSB"/>
<dbReference type="PDBsum" id="6ZSC"/>
<dbReference type="PDBsum" id="6ZSD"/>
<dbReference type="PDBsum" id="6ZSE"/>
<dbReference type="PDBsum" id="6ZSG"/>
<dbReference type="PDBsum" id="7A5F"/>
<dbReference type="PDBsum" id="7A5G"/>
<dbReference type="PDBsum" id="7A5H"/>
<dbReference type="PDBsum" id="7A5I"/>
<dbReference type="PDBsum" id="7A5J"/>
<dbReference type="PDBsum" id="7A5K"/>
<dbReference type="PDBsum" id="7L08"/>
<dbReference type="PDBsum" id="7L20"/>
<dbReference type="PDBsum" id="7O9K"/>
<dbReference type="PDBsum" id="7O9M"/>
<dbReference type="PDBsum" id="7ODR"/>
<dbReference type="PDBsum" id="7ODS"/>
<dbReference type="PDBsum" id="7ODT"/>
<dbReference type="PDBsum" id="7OF0"/>
<dbReference type="PDBsum" id="7OF2"/>
<dbReference type="PDBsum" id="7OF3"/>
<dbReference type="PDBsum" id="7OF4"/>
<dbReference type="PDBsum" id="7OF5"/>
<dbReference type="PDBsum" id="7OF6"/>
<dbReference type="PDBsum" id="7OF7"/>
<dbReference type="PDBsum" id="7OG4"/>
<dbReference type="PDBsum" id="7OI6"/>
<dbReference type="PDBsum" id="7OI7"/>
<dbReference type="PDBsum" id="7OI8"/>
<dbReference type="PDBsum" id="7OI9"/>
<dbReference type="PDBsum" id="7OIA"/>
<dbReference type="PDBsum" id="7OIB"/>
<dbReference type="PDBsum" id="7OIC"/>
<dbReference type="PDBsum" id="7OID"/>
<dbReference type="PDBsum" id="7OIE"/>
<dbReference type="PDBsum" id="7PD3"/>
<dbReference type="PDBsum" id="7PO4"/>
<dbReference type="PDBsum" id="7QH6"/>
<dbReference type="PDBsum" id="7QH7"/>
<dbReference type="PDBsum" id="7QI4"/>
<dbReference type="PDBsum" id="7QI5"/>
<dbReference type="PDBsum" id="7QI6"/>
<dbReference type="PDBsum" id="8ANY"/>
<dbReference type="PDBsum" id="8K2A"/>
<dbReference type="PDBsum" id="8K2B"/>
<dbReference type="PDBsum" id="8OIR"/>
<dbReference type="PDBsum" id="8OIT"/>
<dbReference type="PDBsum" id="8PK0"/>
<dbReference type="PDBsum" id="8QSJ"/>
<dbReference type="PDBsum" id="8QU1"/>
<dbReference type="PDBsum" id="8QU5"/>
<dbReference type="PDBsum" id="8RRI"/>
<dbReference type="PDBsum" id="8XT0"/>
<dbReference type="PDBsum" id="8XT1"/>
<dbReference type="PDBsum" id="8XT2"/>
<dbReference type="PDBsum" id="8XT3"/>
<dbReference type="EMDB" id="EMD-0514"/>
<dbReference type="EMDB" id="EMD-0515"/>
<dbReference type="EMDB" id="EMD-11278"/>
<dbReference type="EMDB" id="EMD-11279"/>
<dbReference type="EMDB" id="EMD-11390"/>
<dbReference type="EMDB" id="EMD-11391"/>
<dbReference type="EMDB" id="EMD-11392"/>
<dbReference type="EMDB" id="EMD-11393"/>
<dbReference type="EMDB" id="EMD-11394"/>
<dbReference type="EMDB" id="EMD-11395"/>
<dbReference type="EMDB" id="EMD-11397"/>
<dbReference type="EMDB" id="EMD-11641"/>
<dbReference type="EMDB" id="EMD-11642"/>
<dbReference type="EMDB" id="EMD-11643"/>
<dbReference type="EMDB" id="EMD-11644"/>
<dbReference type="EMDB" id="EMD-11645"/>
<dbReference type="EMDB" id="EMD-11646"/>
<dbReference type="EMDB" id="EMD-12763"/>
<dbReference type="EMDB" id="EMD-12764"/>
<dbReference type="EMDB" id="EMD-12845"/>
<dbReference type="EMDB" id="EMD-12846"/>
<dbReference type="EMDB" id="EMD-12847"/>
<dbReference type="EMDB" id="EMD-12865"/>
<dbReference type="EMDB" id="EMD-12867"/>
<dbReference type="EMDB" id="EMD-12868"/>
<dbReference type="EMDB" id="EMD-12869"/>
<dbReference type="EMDB" id="EMD-12870"/>
<dbReference type="EMDB" id="EMD-12871"/>
<dbReference type="EMDB" id="EMD-12872"/>
<dbReference type="EMDB" id="EMD-12877"/>
<dbReference type="EMDB" id="EMD-12919"/>
<dbReference type="EMDB" id="EMD-12920"/>
<dbReference type="EMDB" id="EMD-12921"/>
<dbReference type="EMDB" id="EMD-12922"/>
<dbReference type="EMDB" id="EMD-12923"/>
<dbReference type="EMDB" id="EMD-12924"/>
<dbReference type="EMDB" id="EMD-12925"/>
<dbReference type="EMDB" id="EMD-12926"/>
<dbReference type="EMDB" id="EMD-12927"/>
<dbReference type="EMDB" id="EMD-13329"/>
<dbReference type="EMDB" id="EMD-13562"/>
<dbReference type="EMDB" id="EMD-13965"/>
<dbReference type="EMDB" id="EMD-13967"/>
<dbReference type="EMDB" id="EMD-13980"/>
<dbReference type="EMDB" id="EMD-13981"/>
<dbReference type="EMDB" id="EMD-13982"/>
<dbReference type="EMDB" id="EMD-15544"/>
<dbReference type="EMDB" id="EMD-16897"/>
<dbReference type="EMDB" id="EMD-16899"/>
<dbReference type="EMDB" id="EMD-17719"/>
<dbReference type="EMDB" id="EMD-19460"/>
<dbReference type="EMDB" id="EMD-21233"/>
<dbReference type="EMDB" id="EMD-21242"/>
<dbReference type="EMDB" id="EMD-23096"/>
<dbReference type="EMDB" id="EMD-23121"/>
<dbReference type="EMDB" id="EMD-36836"/>
<dbReference type="EMDB" id="EMD-36837"/>
<dbReference type="EMDB" id="EMD-3842"/>
<dbReference type="EMDB" id="EMD-3843"/>
<dbReference type="EMDB" id="EMD-38632"/>
<dbReference type="EMDB" id="EMD-38633"/>
<dbReference type="EMDB" id="EMD-38634"/>
<dbReference type="EMDB" id="EMD-38635"/>
<dbReference type="EMDB" id="EMD-4434"/>
<dbReference type="SMR" id="Q8TCC3"/>
<dbReference type="BioGRID" id="119417">
    <property type="interactions" value="169"/>
</dbReference>
<dbReference type="ComplexPortal" id="CPX-5226">
    <property type="entry name" value="39S mitochondrial large ribosomal subunit"/>
</dbReference>
<dbReference type="CORUM" id="Q8TCC3"/>
<dbReference type="FunCoup" id="Q8TCC3">
    <property type="interactions" value="1362"/>
</dbReference>
<dbReference type="IntAct" id="Q8TCC3">
    <property type="interactions" value="116"/>
</dbReference>
<dbReference type="MINT" id="Q8TCC3"/>
<dbReference type="STRING" id="9606.ENSP00000338057"/>
<dbReference type="GlyGen" id="Q8TCC3">
    <property type="glycosylation" value="1 site, 1 O-linked glycan (1 site)"/>
</dbReference>
<dbReference type="iPTMnet" id="Q8TCC3"/>
<dbReference type="PhosphoSitePlus" id="Q8TCC3"/>
<dbReference type="BioMuta" id="MRPL30"/>
<dbReference type="DMDM" id="74730583"/>
<dbReference type="jPOST" id="Q8TCC3"/>
<dbReference type="MassIVE" id="Q8TCC3"/>
<dbReference type="PaxDb" id="9606-ENSP00000338057"/>
<dbReference type="PeptideAtlas" id="Q8TCC3"/>
<dbReference type="Pumba" id="Q8TCC3"/>
<dbReference type="TopDownProteomics" id="Q8TCC3-1">
    <molecule id="Q8TCC3-1"/>
</dbReference>
<dbReference type="TopDownProteomics" id="Q8TCC3-2">
    <molecule id="Q8TCC3-2"/>
</dbReference>
<dbReference type="TopDownProteomics" id="Q8TCC3-3">
    <molecule id="Q8TCC3-3"/>
</dbReference>
<dbReference type="Antibodypedia" id="65219">
    <property type="antibodies" value="60 antibodies from 17 providers"/>
</dbReference>
<dbReference type="DNASU" id="51263"/>
<dbReference type="Ensembl" id="ENST00000338148.8">
    <molecule id="Q8TCC3-1"/>
    <property type="protein sequence ID" value="ENSP00000338057.3"/>
    <property type="gene ID" value="ENSG00000185414.20"/>
</dbReference>
<dbReference type="Ensembl" id="ENST00000409841.1">
    <molecule id="Q8TCC3-1"/>
    <property type="protein sequence ID" value="ENSP00000386752.1"/>
    <property type="gene ID" value="ENSG00000185414.20"/>
</dbReference>
<dbReference type="GeneID" id="51263"/>
<dbReference type="KEGG" id="hsa:51263"/>
<dbReference type="MANE-Select" id="ENST00000338148.8">
    <property type="protein sequence ID" value="ENSP00000338057.3"/>
    <property type="RefSeq nucleotide sequence ID" value="NM_145212.4"/>
    <property type="RefSeq protein sequence ID" value="NP_660213.1"/>
</dbReference>
<dbReference type="UCSC" id="uc002szv.4">
    <molecule id="Q8TCC3-1"/>
    <property type="organism name" value="human"/>
</dbReference>
<dbReference type="AGR" id="HGNC:14036"/>
<dbReference type="CTD" id="51263"/>
<dbReference type="GeneCards" id="MRPL30"/>
<dbReference type="HGNC" id="HGNC:14036">
    <property type="gene designation" value="MRPL30"/>
</dbReference>
<dbReference type="HPA" id="ENSG00000185414">
    <property type="expression patterns" value="Low tissue specificity"/>
</dbReference>
<dbReference type="MIM" id="611838">
    <property type="type" value="gene"/>
</dbReference>
<dbReference type="neXtProt" id="NX_Q8TCC3"/>
<dbReference type="OpenTargets" id="ENSG00000185414"/>
<dbReference type="PharmGKB" id="PA30961"/>
<dbReference type="VEuPathDB" id="HostDB:ENSG00000185414"/>
<dbReference type="eggNOG" id="KOG4799">
    <property type="taxonomic scope" value="Eukaryota"/>
</dbReference>
<dbReference type="GeneTree" id="ENSGT00390000016769"/>
<dbReference type="HOGENOM" id="CLU_139849_0_0_1"/>
<dbReference type="InParanoid" id="Q8TCC3"/>
<dbReference type="OMA" id="VESFICT"/>
<dbReference type="OrthoDB" id="9973389at2759"/>
<dbReference type="PAN-GO" id="Q8TCC3">
    <property type="GO annotations" value="1 GO annotation based on evolutionary models"/>
</dbReference>
<dbReference type="PhylomeDB" id="Q8TCC3"/>
<dbReference type="TreeFam" id="TF314611"/>
<dbReference type="PathwayCommons" id="Q8TCC3"/>
<dbReference type="Reactome" id="R-HSA-5368286">
    <property type="pathway name" value="Mitochondrial translation initiation"/>
</dbReference>
<dbReference type="Reactome" id="R-HSA-5389840">
    <property type="pathway name" value="Mitochondrial translation elongation"/>
</dbReference>
<dbReference type="Reactome" id="R-HSA-5419276">
    <property type="pathway name" value="Mitochondrial translation termination"/>
</dbReference>
<dbReference type="SignaLink" id="Q8TCC3"/>
<dbReference type="SIGNOR" id="Q8TCC3"/>
<dbReference type="BioGRID-ORCS" id="51263">
    <property type="hits" value="145 hits in 1124 CRISPR screens"/>
</dbReference>
<dbReference type="ChiTaRS" id="MRPL30">
    <property type="organism name" value="human"/>
</dbReference>
<dbReference type="EvolutionaryTrace" id="Q8TCC3"/>
<dbReference type="GeneWiki" id="MRPL30"/>
<dbReference type="GenomeRNAi" id="51263"/>
<dbReference type="Pharos" id="Q8TCC3">
    <property type="development level" value="Tdark"/>
</dbReference>
<dbReference type="PRO" id="PR:Q8TCC3"/>
<dbReference type="Proteomes" id="UP000005640">
    <property type="component" value="Chromosome 2"/>
</dbReference>
<dbReference type="RNAct" id="Q8TCC3">
    <property type="molecule type" value="protein"/>
</dbReference>
<dbReference type="Bgee" id="ENSG00000185414">
    <property type="expression patterns" value="Expressed in tibialis anterior and 193 other cell types or tissues"/>
</dbReference>
<dbReference type="ExpressionAtlas" id="Q8TCC3">
    <property type="expression patterns" value="baseline and differential"/>
</dbReference>
<dbReference type="GO" id="GO:0005743">
    <property type="term" value="C:mitochondrial inner membrane"/>
    <property type="evidence" value="ECO:0000304"/>
    <property type="project" value="Reactome"/>
</dbReference>
<dbReference type="GO" id="GO:0005762">
    <property type="term" value="C:mitochondrial large ribosomal subunit"/>
    <property type="evidence" value="ECO:0000314"/>
    <property type="project" value="UniProtKB"/>
</dbReference>
<dbReference type="GO" id="GO:0005739">
    <property type="term" value="C:mitochondrion"/>
    <property type="evidence" value="ECO:0000314"/>
    <property type="project" value="UniProtKB"/>
</dbReference>
<dbReference type="GO" id="GO:0003735">
    <property type="term" value="F:structural constituent of ribosome"/>
    <property type="evidence" value="ECO:0007669"/>
    <property type="project" value="InterPro"/>
</dbReference>
<dbReference type="GO" id="GO:0032543">
    <property type="term" value="P:mitochondrial translation"/>
    <property type="evidence" value="ECO:0000303"/>
    <property type="project" value="ComplexPortal"/>
</dbReference>
<dbReference type="CDD" id="cd01658">
    <property type="entry name" value="Ribosomal_L30"/>
    <property type="match status" value="1"/>
</dbReference>
<dbReference type="FunFam" id="3.30.1390.20:FF:000005">
    <property type="entry name" value="39S ribosomal protein L30, mitochondrial"/>
    <property type="match status" value="1"/>
</dbReference>
<dbReference type="Gene3D" id="3.30.1390.20">
    <property type="entry name" value="Ribosomal protein L30, ferredoxin-like fold domain"/>
    <property type="match status" value="1"/>
</dbReference>
<dbReference type="InterPro" id="IPR036919">
    <property type="entry name" value="Ribo_uL30_ferredoxin-like_sf"/>
</dbReference>
<dbReference type="InterPro" id="IPR005996">
    <property type="entry name" value="Ribosomal_uL30_bac-type"/>
</dbReference>
<dbReference type="InterPro" id="IPR016082">
    <property type="entry name" value="Ribosomal_uL30_ferredoxin-like"/>
</dbReference>
<dbReference type="PANTHER" id="PTHR15892:SF2">
    <property type="entry name" value="LARGE RIBOSOMAL SUBUNIT PROTEIN UL30M"/>
    <property type="match status" value="1"/>
</dbReference>
<dbReference type="PANTHER" id="PTHR15892">
    <property type="entry name" value="MITOCHONDRIAL RIBOSOMAL PROTEIN L30"/>
    <property type="match status" value="1"/>
</dbReference>
<dbReference type="Pfam" id="PF00327">
    <property type="entry name" value="Ribosomal_L30"/>
    <property type="match status" value="1"/>
</dbReference>
<dbReference type="SUPFAM" id="SSF55129">
    <property type="entry name" value="Ribosomal protein L30p/L7e"/>
    <property type="match status" value="1"/>
</dbReference>
<organism>
    <name type="scientific">Homo sapiens</name>
    <name type="common">Human</name>
    <dbReference type="NCBI Taxonomy" id="9606"/>
    <lineage>
        <taxon>Eukaryota</taxon>
        <taxon>Metazoa</taxon>
        <taxon>Chordata</taxon>
        <taxon>Craniata</taxon>
        <taxon>Vertebrata</taxon>
        <taxon>Euteleostomi</taxon>
        <taxon>Mammalia</taxon>
        <taxon>Eutheria</taxon>
        <taxon>Euarchontoglires</taxon>
        <taxon>Primates</taxon>
        <taxon>Haplorrhini</taxon>
        <taxon>Catarrhini</taxon>
        <taxon>Hominidae</taxon>
        <taxon>Homo</taxon>
    </lineage>
</organism>
<protein>
    <recommendedName>
        <fullName evidence="11">Large ribosomal subunit protein uL30m</fullName>
    </recommendedName>
    <alternativeName>
        <fullName>39S ribosomal protein L28, mitochondrial</fullName>
        <shortName>L28mt</shortName>
        <shortName>MRP-L28</shortName>
    </alternativeName>
    <alternativeName>
        <fullName>39S ribosomal protein L30, mitochondrial</fullName>
        <shortName>L30mt</shortName>
        <shortName>MRP-L30</shortName>
    </alternativeName>
</protein>
<keyword id="KW-0002">3D-structure</keyword>
<keyword id="KW-0025">Alternative splicing</keyword>
<keyword id="KW-0496">Mitochondrion</keyword>
<keyword id="KW-1267">Proteomics identification</keyword>
<keyword id="KW-1185">Reference proteome</keyword>
<keyword id="KW-0687">Ribonucleoprotein</keyword>
<keyword id="KW-0689">Ribosomal protein</keyword>
<keyword id="KW-0809">Transit peptide</keyword>
<reference key="1">
    <citation type="journal article" date="2000" name="Genome Res.">
        <title>Cloning and functional analysis of cDNAs with open reading frames for 300 previously undefined genes expressed in CD34+ hematopoietic stem/progenitor cells.</title>
        <authorList>
            <person name="Zhang Q.-H."/>
            <person name="Ye M."/>
            <person name="Wu X.-Y."/>
            <person name="Ren S.-X."/>
            <person name="Zhao M."/>
            <person name="Zhao C.-J."/>
            <person name="Fu G."/>
            <person name="Shen Y."/>
            <person name="Fan H.-Y."/>
            <person name="Lu G."/>
            <person name="Zhong M."/>
            <person name="Xu X.-R."/>
            <person name="Han Z.-G."/>
            <person name="Zhang J.-W."/>
            <person name="Tao J."/>
            <person name="Huang Q.-H."/>
            <person name="Zhou J."/>
            <person name="Hu G.-X."/>
            <person name="Gu J."/>
            <person name="Chen S.-J."/>
            <person name="Chen Z."/>
        </authorList>
    </citation>
    <scope>NUCLEOTIDE SEQUENCE [LARGE SCALE MRNA] (ISOFORM 3)</scope>
    <source>
        <tissue>Umbilical cord blood</tissue>
    </source>
</reference>
<reference key="2">
    <citation type="journal article" date="2004" name="Nat. Genet.">
        <title>Complete sequencing and characterization of 21,243 full-length human cDNAs.</title>
        <authorList>
            <person name="Ota T."/>
            <person name="Suzuki Y."/>
            <person name="Nishikawa T."/>
            <person name="Otsuki T."/>
            <person name="Sugiyama T."/>
            <person name="Irie R."/>
            <person name="Wakamatsu A."/>
            <person name="Hayashi K."/>
            <person name="Sato H."/>
            <person name="Nagai K."/>
            <person name="Kimura K."/>
            <person name="Makita H."/>
            <person name="Sekine M."/>
            <person name="Obayashi M."/>
            <person name="Nishi T."/>
            <person name="Shibahara T."/>
            <person name="Tanaka T."/>
            <person name="Ishii S."/>
            <person name="Yamamoto J."/>
            <person name="Saito K."/>
            <person name="Kawai Y."/>
            <person name="Isono Y."/>
            <person name="Nakamura Y."/>
            <person name="Nagahari K."/>
            <person name="Murakami K."/>
            <person name="Yasuda T."/>
            <person name="Iwayanagi T."/>
            <person name="Wagatsuma M."/>
            <person name="Shiratori A."/>
            <person name="Sudo H."/>
            <person name="Hosoiri T."/>
            <person name="Kaku Y."/>
            <person name="Kodaira H."/>
            <person name="Kondo H."/>
            <person name="Sugawara M."/>
            <person name="Takahashi M."/>
            <person name="Kanda K."/>
            <person name="Yokoi T."/>
            <person name="Furuya T."/>
            <person name="Kikkawa E."/>
            <person name="Omura Y."/>
            <person name="Abe K."/>
            <person name="Kamihara K."/>
            <person name="Katsuta N."/>
            <person name="Sato K."/>
            <person name="Tanikawa M."/>
            <person name="Yamazaki M."/>
            <person name="Ninomiya K."/>
            <person name="Ishibashi T."/>
            <person name="Yamashita H."/>
            <person name="Murakawa K."/>
            <person name="Fujimori K."/>
            <person name="Tanai H."/>
            <person name="Kimata M."/>
            <person name="Watanabe M."/>
            <person name="Hiraoka S."/>
            <person name="Chiba Y."/>
            <person name="Ishida S."/>
            <person name="Ono Y."/>
            <person name="Takiguchi S."/>
            <person name="Watanabe S."/>
            <person name="Yosida M."/>
            <person name="Hotuta T."/>
            <person name="Kusano J."/>
            <person name="Kanehori K."/>
            <person name="Takahashi-Fujii A."/>
            <person name="Hara H."/>
            <person name="Tanase T.-O."/>
            <person name="Nomura Y."/>
            <person name="Togiya S."/>
            <person name="Komai F."/>
            <person name="Hara R."/>
            <person name="Takeuchi K."/>
            <person name="Arita M."/>
            <person name="Imose N."/>
            <person name="Musashino K."/>
            <person name="Yuuki H."/>
            <person name="Oshima A."/>
            <person name="Sasaki N."/>
            <person name="Aotsuka S."/>
            <person name="Yoshikawa Y."/>
            <person name="Matsunawa H."/>
            <person name="Ichihara T."/>
            <person name="Shiohata N."/>
            <person name="Sano S."/>
            <person name="Moriya S."/>
            <person name="Momiyama H."/>
            <person name="Satoh N."/>
            <person name="Takami S."/>
            <person name="Terashima Y."/>
            <person name="Suzuki O."/>
            <person name="Nakagawa S."/>
            <person name="Senoh A."/>
            <person name="Mizoguchi H."/>
            <person name="Goto Y."/>
            <person name="Shimizu F."/>
            <person name="Wakebe H."/>
            <person name="Hishigaki H."/>
            <person name="Watanabe T."/>
            <person name="Sugiyama A."/>
            <person name="Takemoto M."/>
            <person name="Kawakami B."/>
            <person name="Yamazaki M."/>
            <person name="Watanabe K."/>
            <person name="Kumagai A."/>
            <person name="Itakura S."/>
            <person name="Fukuzumi Y."/>
            <person name="Fujimori Y."/>
            <person name="Komiyama M."/>
            <person name="Tashiro H."/>
            <person name="Tanigami A."/>
            <person name="Fujiwara T."/>
            <person name="Ono T."/>
            <person name="Yamada K."/>
            <person name="Fujii Y."/>
            <person name="Ozaki K."/>
            <person name="Hirao M."/>
            <person name="Ohmori Y."/>
            <person name="Kawabata A."/>
            <person name="Hikiji T."/>
            <person name="Kobatake N."/>
            <person name="Inagaki H."/>
            <person name="Ikema Y."/>
            <person name="Okamoto S."/>
            <person name="Okitani R."/>
            <person name="Kawakami T."/>
            <person name="Noguchi S."/>
            <person name="Itoh T."/>
            <person name="Shigeta K."/>
            <person name="Senba T."/>
            <person name="Matsumura K."/>
            <person name="Nakajima Y."/>
            <person name="Mizuno T."/>
            <person name="Morinaga M."/>
            <person name="Sasaki M."/>
            <person name="Togashi T."/>
            <person name="Oyama M."/>
            <person name="Hata H."/>
            <person name="Watanabe M."/>
            <person name="Komatsu T."/>
            <person name="Mizushima-Sugano J."/>
            <person name="Satoh T."/>
            <person name="Shirai Y."/>
            <person name="Takahashi Y."/>
            <person name="Nakagawa K."/>
            <person name="Okumura K."/>
            <person name="Nagase T."/>
            <person name="Nomura N."/>
            <person name="Kikuchi H."/>
            <person name="Masuho Y."/>
            <person name="Yamashita R."/>
            <person name="Nakai K."/>
            <person name="Yada T."/>
            <person name="Nakamura Y."/>
            <person name="Ohara O."/>
            <person name="Isogai T."/>
            <person name="Sugano S."/>
        </authorList>
    </citation>
    <scope>NUCLEOTIDE SEQUENCE [LARGE SCALE MRNA] (ISOFORM 2)</scope>
    <scope>VARIANT THR-130</scope>
    <source>
        <tissue>Uterus</tissue>
    </source>
</reference>
<reference key="3">
    <citation type="journal article" date="2005" name="Nature">
        <title>Generation and annotation of the DNA sequences of human chromosomes 2 and 4.</title>
        <authorList>
            <person name="Hillier L.W."/>
            <person name="Graves T.A."/>
            <person name="Fulton R.S."/>
            <person name="Fulton L.A."/>
            <person name="Pepin K.H."/>
            <person name="Minx P."/>
            <person name="Wagner-McPherson C."/>
            <person name="Layman D."/>
            <person name="Wylie K."/>
            <person name="Sekhon M."/>
            <person name="Becker M.C."/>
            <person name="Fewell G.A."/>
            <person name="Delehaunty K.D."/>
            <person name="Miner T.L."/>
            <person name="Nash W.E."/>
            <person name="Kremitzki C."/>
            <person name="Oddy L."/>
            <person name="Du H."/>
            <person name="Sun H."/>
            <person name="Bradshaw-Cordum H."/>
            <person name="Ali J."/>
            <person name="Carter J."/>
            <person name="Cordes M."/>
            <person name="Harris A."/>
            <person name="Isak A."/>
            <person name="van Brunt A."/>
            <person name="Nguyen C."/>
            <person name="Du F."/>
            <person name="Courtney L."/>
            <person name="Kalicki J."/>
            <person name="Ozersky P."/>
            <person name="Abbott S."/>
            <person name="Armstrong J."/>
            <person name="Belter E.A."/>
            <person name="Caruso L."/>
            <person name="Cedroni M."/>
            <person name="Cotton M."/>
            <person name="Davidson T."/>
            <person name="Desai A."/>
            <person name="Elliott G."/>
            <person name="Erb T."/>
            <person name="Fronick C."/>
            <person name="Gaige T."/>
            <person name="Haakenson W."/>
            <person name="Haglund K."/>
            <person name="Holmes A."/>
            <person name="Harkins R."/>
            <person name="Kim K."/>
            <person name="Kruchowski S.S."/>
            <person name="Strong C.M."/>
            <person name="Grewal N."/>
            <person name="Goyea E."/>
            <person name="Hou S."/>
            <person name="Levy A."/>
            <person name="Martinka S."/>
            <person name="Mead K."/>
            <person name="McLellan M.D."/>
            <person name="Meyer R."/>
            <person name="Randall-Maher J."/>
            <person name="Tomlinson C."/>
            <person name="Dauphin-Kohlberg S."/>
            <person name="Kozlowicz-Reilly A."/>
            <person name="Shah N."/>
            <person name="Swearengen-Shahid S."/>
            <person name="Snider J."/>
            <person name="Strong J.T."/>
            <person name="Thompson J."/>
            <person name="Yoakum M."/>
            <person name="Leonard S."/>
            <person name="Pearman C."/>
            <person name="Trani L."/>
            <person name="Radionenko M."/>
            <person name="Waligorski J.E."/>
            <person name="Wang C."/>
            <person name="Rock S.M."/>
            <person name="Tin-Wollam A.-M."/>
            <person name="Maupin R."/>
            <person name="Latreille P."/>
            <person name="Wendl M.C."/>
            <person name="Yang S.-P."/>
            <person name="Pohl C."/>
            <person name="Wallis J.W."/>
            <person name="Spieth J."/>
            <person name="Bieri T.A."/>
            <person name="Berkowicz N."/>
            <person name="Nelson J.O."/>
            <person name="Osborne J."/>
            <person name="Ding L."/>
            <person name="Meyer R."/>
            <person name="Sabo A."/>
            <person name="Shotland Y."/>
            <person name="Sinha P."/>
            <person name="Wohldmann P.E."/>
            <person name="Cook L.L."/>
            <person name="Hickenbotham M.T."/>
            <person name="Eldred J."/>
            <person name="Williams D."/>
            <person name="Jones T.A."/>
            <person name="She X."/>
            <person name="Ciccarelli F.D."/>
            <person name="Izaurralde E."/>
            <person name="Taylor J."/>
            <person name="Schmutz J."/>
            <person name="Myers R.M."/>
            <person name="Cox D.R."/>
            <person name="Huang X."/>
            <person name="McPherson J.D."/>
            <person name="Mardis E.R."/>
            <person name="Clifton S.W."/>
            <person name="Warren W.C."/>
            <person name="Chinwalla A.T."/>
            <person name="Eddy S.R."/>
            <person name="Marra M.A."/>
            <person name="Ovcharenko I."/>
            <person name="Furey T.S."/>
            <person name="Miller W."/>
            <person name="Eichler E.E."/>
            <person name="Bork P."/>
            <person name="Suyama M."/>
            <person name="Torrents D."/>
            <person name="Waterston R.H."/>
            <person name="Wilson R.K."/>
        </authorList>
    </citation>
    <scope>NUCLEOTIDE SEQUENCE [LARGE SCALE GENOMIC DNA]</scope>
</reference>
<reference key="4">
    <citation type="submission" date="2005-09" db="EMBL/GenBank/DDBJ databases">
        <authorList>
            <person name="Mural R.J."/>
            <person name="Istrail S."/>
            <person name="Sutton G.G."/>
            <person name="Florea L."/>
            <person name="Halpern A.L."/>
            <person name="Mobarry C.M."/>
            <person name="Lippert R."/>
            <person name="Walenz B."/>
            <person name="Shatkay H."/>
            <person name="Dew I."/>
            <person name="Miller J.R."/>
            <person name="Flanigan M.J."/>
            <person name="Edwards N.J."/>
            <person name="Bolanos R."/>
            <person name="Fasulo D."/>
            <person name="Halldorsson B.V."/>
            <person name="Hannenhalli S."/>
            <person name="Turner R."/>
            <person name="Yooseph S."/>
            <person name="Lu F."/>
            <person name="Nusskern D.R."/>
            <person name="Shue B.C."/>
            <person name="Zheng X.H."/>
            <person name="Zhong F."/>
            <person name="Delcher A.L."/>
            <person name="Huson D.H."/>
            <person name="Kravitz S.A."/>
            <person name="Mouchard L."/>
            <person name="Reinert K."/>
            <person name="Remington K.A."/>
            <person name="Clark A.G."/>
            <person name="Waterman M.S."/>
            <person name="Eichler E.E."/>
            <person name="Adams M.D."/>
            <person name="Hunkapiller M.W."/>
            <person name="Myers E.W."/>
            <person name="Venter J.C."/>
        </authorList>
    </citation>
    <scope>NUCLEOTIDE SEQUENCE [LARGE SCALE GENOMIC DNA]</scope>
    <scope>VARIANT THR-130</scope>
</reference>
<reference key="5">
    <citation type="journal article" date="2004" name="Genome Res.">
        <title>The status, quality, and expansion of the NIH full-length cDNA project: the Mammalian Gene Collection (MGC).</title>
        <authorList>
            <consortium name="The MGC Project Team"/>
        </authorList>
    </citation>
    <scope>NUCLEOTIDE SEQUENCE [LARGE SCALE MRNA] (ISOFORM 1)</scope>
    <scope>VARIANT THR-130</scope>
    <source>
        <tissue>Brain</tissue>
        <tissue>Kidney</tissue>
    </source>
</reference>
<reference key="6">
    <citation type="journal article" date="2001" name="Genomics">
        <title>The human mitochondrial ribosomal protein genes: mapping of 54 genes to the chromosomes and implications for human disorders.</title>
        <authorList>
            <person name="Kenmochi N."/>
            <person name="Suzuki T."/>
            <person name="Uechi T."/>
            <person name="Magoori M."/>
            <person name="Kuniba M."/>
            <person name="Higa S."/>
            <person name="Watanabe K."/>
            <person name="Tanaka T."/>
        </authorList>
    </citation>
    <scope>NUCLEOTIDE SEQUENCE [GENOMIC DNA] OF 94-161</scope>
</reference>
<reference key="7">
    <citation type="journal article" date="2011" name="BMC Syst. Biol.">
        <title>Initial characterization of the human central proteome.</title>
        <authorList>
            <person name="Burkard T.R."/>
            <person name="Planyavsky M."/>
            <person name="Kaupe I."/>
            <person name="Breitwieser F.P."/>
            <person name="Buerckstuemmer T."/>
            <person name="Bennett K.L."/>
            <person name="Superti-Furga G."/>
            <person name="Colinge J."/>
        </authorList>
    </citation>
    <scope>IDENTIFICATION BY MASS SPECTROMETRY [LARGE SCALE ANALYSIS]</scope>
</reference>
<reference key="8">
    <citation type="journal article" date="2015" name="Proteomics">
        <title>N-terminome analysis of the human mitochondrial proteome.</title>
        <authorList>
            <person name="Vaca Jacome A.S."/>
            <person name="Rabilloud T."/>
            <person name="Schaeffer-Reiss C."/>
            <person name="Rompais M."/>
            <person name="Ayoub D."/>
            <person name="Lane L."/>
            <person name="Bairoch A."/>
            <person name="Van Dorsselaer A."/>
            <person name="Carapito C."/>
        </authorList>
    </citation>
    <scope>IDENTIFICATION BY MASS SPECTROMETRY [LARGE SCALE ANALYSIS]</scope>
</reference>
<reference evidence="13" key="9">
    <citation type="journal article" date="2014" name="Science">
        <title>Structure of the large ribosomal subunit from human mitochondria.</title>
        <authorList>
            <person name="Brown A."/>
            <person name="Amunts A."/>
            <person name="Bai X.C."/>
            <person name="Sugimoto Y."/>
            <person name="Edwards P.C."/>
            <person name="Murshudov G."/>
            <person name="Scheres S.H."/>
            <person name="Ramakrishnan V."/>
        </authorList>
    </citation>
    <scope>STRUCTURE BY ELECTRON MICROSCOPY (3.40 ANGSTROMS)</scope>
    <scope>SUBCELLULAR LOCATION</scope>
    <scope>SUBUNIT</scope>
</reference>
<reference evidence="14" key="10">
    <citation type="journal article" date="2015" name="Science">
        <title>Ribosome. The structure of the human mitochondrial ribosome.</title>
        <authorList>
            <person name="Amunts A."/>
            <person name="Brown A."/>
            <person name="Toots J."/>
            <person name="Scheres S.H."/>
            <person name="Ramakrishnan V."/>
        </authorList>
    </citation>
    <scope>STRUCTURE BY ELECTRON MICROSCOPY (3.50 ANGSTROMS)</scope>
    <scope>SUBCELLULAR LOCATION</scope>
    <scope>SUBUNIT</scope>
</reference>
<reference evidence="15 16" key="11">
    <citation type="journal article" date="2017" name="Nat. Struct. Mol. Biol.">
        <title>Structures of the human mitochondrial ribosome in native states of assembly.</title>
        <authorList>
            <person name="Brown A."/>
            <person name="Rathore S."/>
            <person name="Kimanius D."/>
            <person name="Aibara S."/>
            <person name="Bai X.C."/>
            <person name="Rorbach J."/>
            <person name="Amunts A."/>
            <person name="Ramakrishnan V."/>
        </authorList>
    </citation>
    <scope>STRUCTURE BY ELECTRON MICROSCOPY (3.03 ANGSTROMS)</scope>
    <scope>SUBCELLULAR LOCATION</scope>
    <scope>SUBUNIT</scope>
</reference>
<reference evidence="17 18" key="12">
    <citation type="journal article" date="2022" name="Nat. Commun.">
        <title>A late-stage assembly checkpoint of the human mitochondrial ribosome large subunit.</title>
        <authorList>
            <person name="Rebelo-Guiomar P."/>
            <person name="Pellegrino S."/>
            <person name="Dent K.C."/>
            <person name="Sas-Chen A."/>
            <person name="Miller-Fleming L."/>
            <person name="Garone C."/>
            <person name="Van Haute L."/>
            <person name="Rogan J.F."/>
            <person name="Dinan A."/>
            <person name="Firth A.E."/>
            <person name="Andrews B."/>
            <person name="Whitworth A.J."/>
            <person name="Schwartz S."/>
            <person name="Warren A.J."/>
            <person name="Minczuk M."/>
        </authorList>
    </citation>
    <scope>STRUCTURE BY ELECTRON MICROSCOPY (2.9 ANGSTROMS) IN COMPLEX WITH MTLSU</scope>
    <scope>SUBUNIT</scope>
</reference>
<sequence length="161" mass="18546">MAGILRLVVQWPPGRLQTVTKGVESLICTDWIRHKFTRSRIPEKVFQASPEDHEKYGGDPQNPHKLHIVTRIKSTRRRPYWEKDIIKMLGLEKAHTPQVHKNIPSVNAKLKVVKHLIRIKPLKLPQGLPAEENMSNTCLKSTGELVVQWHLKPVEQKAHES</sequence>
<evidence type="ECO:0000250" key="1"/>
<evidence type="ECO:0000269" key="2">
    <source>
    </source>
</evidence>
<evidence type="ECO:0000269" key="3">
    <source>
    </source>
</evidence>
<evidence type="ECO:0000269" key="4">
    <source>
    </source>
</evidence>
<evidence type="ECO:0000269" key="5">
    <source>
    </source>
</evidence>
<evidence type="ECO:0000269" key="6">
    <source>
    </source>
</evidence>
<evidence type="ECO:0000269" key="7">
    <source>
    </source>
</evidence>
<evidence type="ECO:0000269" key="8">
    <source ref="4"/>
</evidence>
<evidence type="ECO:0000303" key="9">
    <source>
    </source>
</evidence>
<evidence type="ECO:0000303" key="10">
    <source>
    </source>
</evidence>
<evidence type="ECO:0000303" key="11">
    <source>
    </source>
</evidence>
<evidence type="ECO:0000305" key="12"/>
<evidence type="ECO:0007744" key="13">
    <source>
        <dbReference type="PDB" id="3J7Y"/>
    </source>
</evidence>
<evidence type="ECO:0007744" key="14">
    <source>
        <dbReference type="PDB" id="3J9M"/>
    </source>
</evidence>
<evidence type="ECO:0007744" key="15">
    <source>
        <dbReference type="PDB" id="5OOL"/>
    </source>
</evidence>
<evidence type="ECO:0007744" key="16">
    <source>
        <dbReference type="PDB" id="5OOM"/>
    </source>
</evidence>
<evidence type="ECO:0007744" key="17">
    <source>
        <dbReference type="PDB" id="7QH6"/>
    </source>
</evidence>
<evidence type="ECO:0007744" key="18">
    <source>
        <dbReference type="PDB" id="7QH7"/>
    </source>
</evidence>
<evidence type="ECO:0007829" key="19">
    <source>
        <dbReference type="PDB" id="7OF0"/>
    </source>
</evidence>
<evidence type="ECO:0007829" key="20">
    <source>
        <dbReference type="PDB" id="7OI9"/>
    </source>
</evidence>
<evidence type="ECO:0007829" key="21">
    <source>
        <dbReference type="PDB" id="7OIA"/>
    </source>
</evidence>
<evidence type="ECO:0007829" key="22">
    <source>
        <dbReference type="PDB" id="7QH7"/>
    </source>
</evidence>